<comment type="function">
    <text evidence="1">Catalyzes the conversion of 3-deoxy-D-arabino-heptulosonate 7-phosphate (DAHP) to dehydroquinate (DHQ).</text>
</comment>
<comment type="catalytic activity">
    <reaction evidence="1">
        <text>7-phospho-2-dehydro-3-deoxy-D-arabino-heptonate = 3-dehydroquinate + phosphate</text>
        <dbReference type="Rhea" id="RHEA:21968"/>
        <dbReference type="ChEBI" id="CHEBI:32364"/>
        <dbReference type="ChEBI" id="CHEBI:43474"/>
        <dbReference type="ChEBI" id="CHEBI:58394"/>
        <dbReference type="EC" id="4.2.3.4"/>
    </reaction>
</comment>
<comment type="cofactor">
    <cofactor evidence="1">
        <name>Co(2+)</name>
        <dbReference type="ChEBI" id="CHEBI:48828"/>
    </cofactor>
    <cofactor evidence="1">
        <name>Zn(2+)</name>
        <dbReference type="ChEBI" id="CHEBI:29105"/>
    </cofactor>
    <text evidence="1">Binds 1 divalent metal cation per subunit. Can use either Co(2+) or Zn(2+).</text>
</comment>
<comment type="cofactor">
    <cofactor evidence="1">
        <name>NAD(+)</name>
        <dbReference type="ChEBI" id="CHEBI:57540"/>
    </cofactor>
</comment>
<comment type="pathway">
    <text evidence="1">Metabolic intermediate biosynthesis; chorismate biosynthesis; chorismate from D-erythrose 4-phosphate and phosphoenolpyruvate: step 2/7.</text>
</comment>
<comment type="subcellular location">
    <subcellularLocation>
        <location evidence="1">Cytoplasm</location>
    </subcellularLocation>
</comment>
<comment type="similarity">
    <text evidence="1">Belongs to the sugar phosphate cyclases superfamily. Dehydroquinate synthase family.</text>
</comment>
<protein>
    <recommendedName>
        <fullName evidence="1">3-dehydroquinate synthase</fullName>
        <shortName evidence="1">DHQS</shortName>
        <ecNumber evidence="1">4.2.3.4</ecNumber>
    </recommendedName>
</protein>
<organism>
    <name type="scientific">Saccharopolyspora erythraea (strain ATCC 11635 / DSM 40517 / JCM 4748 / NBRC 13426 / NCIMB 8594 / NRRL 2338)</name>
    <dbReference type="NCBI Taxonomy" id="405948"/>
    <lineage>
        <taxon>Bacteria</taxon>
        <taxon>Bacillati</taxon>
        <taxon>Actinomycetota</taxon>
        <taxon>Actinomycetes</taxon>
        <taxon>Pseudonocardiales</taxon>
        <taxon>Pseudonocardiaceae</taxon>
        <taxon>Saccharopolyspora</taxon>
    </lineage>
</organism>
<proteinExistence type="inferred from homology"/>
<keyword id="KW-0028">Amino-acid biosynthesis</keyword>
<keyword id="KW-0057">Aromatic amino acid biosynthesis</keyword>
<keyword id="KW-0170">Cobalt</keyword>
<keyword id="KW-0963">Cytoplasm</keyword>
<keyword id="KW-0456">Lyase</keyword>
<keyword id="KW-0479">Metal-binding</keyword>
<keyword id="KW-0520">NAD</keyword>
<keyword id="KW-0547">Nucleotide-binding</keyword>
<keyword id="KW-1185">Reference proteome</keyword>
<keyword id="KW-0862">Zinc</keyword>
<dbReference type="EC" id="4.2.3.4" evidence="1"/>
<dbReference type="EMBL" id="AM420293">
    <property type="protein sequence ID" value="CAM01373.1"/>
    <property type="molecule type" value="Genomic_DNA"/>
</dbReference>
<dbReference type="RefSeq" id="WP_009943055.1">
    <property type="nucleotide sequence ID" value="NC_009142.1"/>
</dbReference>
<dbReference type="SMR" id="A4FBE8"/>
<dbReference type="STRING" id="405948.SACE_2067"/>
<dbReference type="KEGG" id="sen:SACE_2067"/>
<dbReference type="eggNOG" id="COG0337">
    <property type="taxonomic scope" value="Bacteria"/>
</dbReference>
<dbReference type="HOGENOM" id="CLU_001201_0_3_11"/>
<dbReference type="OrthoDB" id="9806583at2"/>
<dbReference type="UniPathway" id="UPA00053">
    <property type="reaction ID" value="UER00085"/>
</dbReference>
<dbReference type="Proteomes" id="UP000006728">
    <property type="component" value="Chromosome"/>
</dbReference>
<dbReference type="GO" id="GO:0005737">
    <property type="term" value="C:cytoplasm"/>
    <property type="evidence" value="ECO:0007669"/>
    <property type="project" value="UniProtKB-SubCell"/>
</dbReference>
<dbReference type="GO" id="GO:0003856">
    <property type="term" value="F:3-dehydroquinate synthase activity"/>
    <property type="evidence" value="ECO:0007669"/>
    <property type="project" value="UniProtKB-UniRule"/>
</dbReference>
<dbReference type="GO" id="GO:0046872">
    <property type="term" value="F:metal ion binding"/>
    <property type="evidence" value="ECO:0007669"/>
    <property type="project" value="UniProtKB-KW"/>
</dbReference>
<dbReference type="GO" id="GO:0000166">
    <property type="term" value="F:nucleotide binding"/>
    <property type="evidence" value="ECO:0007669"/>
    <property type="project" value="UniProtKB-KW"/>
</dbReference>
<dbReference type="GO" id="GO:0008652">
    <property type="term" value="P:amino acid biosynthetic process"/>
    <property type="evidence" value="ECO:0007669"/>
    <property type="project" value="UniProtKB-KW"/>
</dbReference>
<dbReference type="GO" id="GO:0009073">
    <property type="term" value="P:aromatic amino acid family biosynthetic process"/>
    <property type="evidence" value="ECO:0007669"/>
    <property type="project" value="UniProtKB-KW"/>
</dbReference>
<dbReference type="GO" id="GO:0009423">
    <property type="term" value="P:chorismate biosynthetic process"/>
    <property type="evidence" value="ECO:0007669"/>
    <property type="project" value="UniProtKB-UniRule"/>
</dbReference>
<dbReference type="CDD" id="cd08195">
    <property type="entry name" value="DHQS"/>
    <property type="match status" value="1"/>
</dbReference>
<dbReference type="FunFam" id="3.40.50.1970:FF:000012">
    <property type="entry name" value="3-dehydroquinate synthase"/>
    <property type="match status" value="1"/>
</dbReference>
<dbReference type="Gene3D" id="3.40.50.1970">
    <property type="match status" value="1"/>
</dbReference>
<dbReference type="Gene3D" id="1.20.1090.10">
    <property type="entry name" value="Dehydroquinate synthase-like - alpha domain"/>
    <property type="match status" value="1"/>
</dbReference>
<dbReference type="HAMAP" id="MF_00110">
    <property type="entry name" value="DHQ_synthase"/>
    <property type="match status" value="1"/>
</dbReference>
<dbReference type="InterPro" id="IPR050071">
    <property type="entry name" value="Dehydroquinate_synthase"/>
</dbReference>
<dbReference type="InterPro" id="IPR016037">
    <property type="entry name" value="DHQ_synth_AroB"/>
</dbReference>
<dbReference type="InterPro" id="IPR030963">
    <property type="entry name" value="DHQ_synth_fam"/>
</dbReference>
<dbReference type="InterPro" id="IPR030960">
    <property type="entry name" value="DHQS/DOIS_N"/>
</dbReference>
<dbReference type="InterPro" id="IPR056179">
    <property type="entry name" value="DHQS_C"/>
</dbReference>
<dbReference type="NCBIfam" id="TIGR01357">
    <property type="entry name" value="aroB"/>
    <property type="match status" value="1"/>
</dbReference>
<dbReference type="PANTHER" id="PTHR43622">
    <property type="entry name" value="3-DEHYDROQUINATE SYNTHASE"/>
    <property type="match status" value="1"/>
</dbReference>
<dbReference type="PANTHER" id="PTHR43622:SF7">
    <property type="entry name" value="3-DEHYDROQUINATE SYNTHASE, CHLOROPLASTIC"/>
    <property type="match status" value="1"/>
</dbReference>
<dbReference type="Pfam" id="PF01761">
    <property type="entry name" value="DHQ_synthase"/>
    <property type="match status" value="1"/>
</dbReference>
<dbReference type="Pfam" id="PF24621">
    <property type="entry name" value="DHQS_C"/>
    <property type="match status" value="1"/>
</dbReference>
<dbReference type="PIRSF" id="PIRSF001455">
    <property type="entry name" value="DHQ_synth"/>
    <property type="match status" value="1"/>
</dbReference>
<dbReference type="SUPFAM" id="SSF56796">
    <property type="entry name" value="Dehydroquinate synthase-like"/>
    <property type="match status" value="1"/>
</dbReference>
<sequence length="371" mass="39172">MTEPVRIRVESQAPYDVVVGRGLLGELVDMLRDASVVALVHQPSITTTVETVRDELAAAGLDAHRVEVPDAEDGKSLAVAGFCWEVLGKIGLDRDGVVVSFGGGAVTDVAGFVAGTWMRGVRVVHVPTTLLGMVDAAIGGKAGINTDAGKNLVGVFHEPSAVLVDLATLEGLPRNELVAGMAEVVKAGFIADPEILRLVEADPQGALDPAGEVIAELVRRAIQVKADVVASDLRESHLREVLNYGHTLAHAIERRERYRWRHGAAVSVGLVFAAELARLAGRLDDETADRHKKVLDLLGLPTTYDPDALAQLLEGMRVDKKTRSGVLRFVVLDGLAKPGRLEGPDPSLIAAAYSALTGAPEQKSGGSGVLL</sequence>
<gene>
    <name evidence="1" type="primary">aroB</name>
    <name type="ordered locus">SACE_2067</name>
</gene>
<feature type="chain" id="PRO_1000094593" description="3-dehydroquinate synthase">
    <location>
        <begin position="1"/>
        <end position="371"/>
    </location>
</feature>
<feature type="binding site" evidence="1">
    <location>
        <begin position="70"/>
        <end position="75"/>
    </location>
    <ligand>
        <name>NAD(+)</name>
        <dbReference type="ChEBI" id="CHEBI:57540"/>
    </ligand>
</feature>
<feature type="binding site" evidence="1">
    <location>
        <begin position="104"/>
        <end position="108"/>
    </location>
    <ligand>
        <name>NAD(+)</name>
        <dbReference type="ChEBI" id="CHEBI:57540"/>
    </ligand>
</feature>
<feature type="binding site" evidence="1">
    <location>
        <begin position="128"/>
        <end position="129"/>
    </location>
    <ligand>
        <name>NAD(+)</name>
        <dbReference type="ChEBI" id="CHEBI:57540"/>
    </ligand>
</feature>
<feature type="binding site" evidence="1">
    <location>
        <position position="141"/>
    </location>
    <ligand>
        <name>NAD(+)</name>
        <dbReference type="ChEBI" id="CHEBI:57540"/>
    </ligand>
</feature>
<feature type="binding site" evidence="1">
    <location>
        <position position="150"/>
    </location>
    <ligand>
        <name>NAD(+)</name>
        <dbReference type="ChEBI" id="CHEBI:57540"/>
    </ligand>
</feature>
<feature type="binding site" evidence="1">
    <location>
        <position position="183"/>
    </location>
    <ligand>
        <name>Zn(2+)</name>
        <dbReference type="ChEBI" id="CHEBI:29105"/>
    </ligand>
</feature>
<feature type="binding site" evidence="1">
    <location>
        <position position="246"/>
    </location>
    <ligand>
        <name>Zn(2+)</name>
        <dbReference type="ChEBI" id="CHEBI:29105"/>
    </ligand>
</feature>
<feature type="binding site" evidence="1">
    <location>
        <position position="262"/>
    </location>
    <ligand>
        <name>Zn(2+)</name>
        <dbReference type="ChEBI" id="CHEBI:29105"/>
    </ligand>
</feature>
<evidence type="ECO:0000255" key="1">
    <source>
        <dbReference type="HAMAP-Rule" id="MF_00110"/>
    </source>
</evidence>
<reference key="1">
    <citation type="journal article" date="2007" name="Nat. Biotechnol.">
        <title>Complete genome sequence of the erythromycin-producing bacterium Saccharopolyspora erythraea NRRL23338.</title>
        <authorList>
            <person name="Oliynyk M."/>
            <person name="Samborskyy M."/>
            <person name="Lester J.B."/>
            <person name="Mironenko T."/>
            <person name="Scott N."/>
            <person name="Dickens S."/>
            <person name="Haydock S.F."/>
            <person name="Leadlay P.F."/>
        </authorList>
    </citation>
    <scope>NUCLEOTIDE SEQUENCE [LARGE SCALE GENOMIC DNA]</scope>
    <source>
        <strain>ATCC 11635 / DSM 40517 / JCM 4748 / NBRC 13426 / NCIMB 8594 / NRRL 2338</strain>
    </source>
</reference>
<accession>A4FBE8</accession>
<name>AROB_SACEN</name>